<proteinExistence type="inferred from homology"/>
<feature type="chain" id="PRO_0000100948" description="Threonine--tRNA ligase">
    <location>
        <begin position="1"/>
        <end position="658"/>
    </location>
</feature>
<feature type="domain" description="TGS" evidence="2">
    <location>
        <begin position="1"/>
        <end position="64"/>
    </location>
</feature>
<feature type="region of interest" description="Catalytic" evidence="1">
    <location>
        <begin position="246"/>
        <end position="548"/>
    </location>
</feature>
<feature type="binding site" evidence="1">
    <location>
        <position position="343"/>
    </location>
    <ligand>
        <name>Zn(2+)</name>
        <dbReference type="ChEBI" id="CHEBI:29105"/>
    </ligand>
</feature>
<feature type="binding site" evidence="1">
    <location>
        <position position="394"/>
    </location>
    <ligand>
        <name>Zn(2+)</name>
        <dbReference type="ChEBI" id="CHEBI:29105"/>
    </ligand>
</feature>
<feature type="binding site" evidence="1">
    <location>
        <position position="525"/>
    </location>
    <ligand>
        <name>Zn(2+)</name>
        <dbReference type="ChEBI" id="CHEBI:29105"/>
    </ligand>
</feature>
<protein>
    <recommendedName>
        <fullName evidence="1">Threonine--tRNA ligase</fullName>
        <ecNumber evidence="1">6.1.1.3</ecNumber>
    </recommendedName>
    <alternativeName>
        <fullName evidence="1">Threonyl-tRNA synthetase</fullName>
        <shortName evidence="1">ThrRS</shortName>
    </alternativeName>
</protein>
<comment type="function">
    <text evidence="1">Catalyzes the attachment of threonine to tRNA(Thr) in a two-step reaction: L-threonine is first activated by ATP to form Thr-AMP and then transferred to the acceptor end of tRNA(Thr). Also edits incorrectly charged L-seryl-tRNA(Thr).</text>
</comment>
<comment type="catalytic activity">
    <reaction evidence="1">
        <text>tRNA(Thr) + L-threonine + ATP = L-threonyl-tRNA(Thr) + AMP + diphosphate + H(+)</text>
        <dbReference type="Rhea" id="RHEA:24624"/>
        <dbReference type="Rhea" id="RHEA-COMP:9670"/>
        <dbReference type="Rhea" id="RHEA-COMP:9704"/>
        <dbReference type="ChEBI" id="CHEBI:15378"/>
        <dbReference type="ChEBI" id="CHEBI:30616"/>
        <dbReference type="ChEBI" id="CHEBI:33019"/>
        <dbReference type="ChEBI" id="CHEBI:57926"/>
        <dbReference type="ChEBI" id="CHEBI:78442"/>
        <dbReference type="ChEBI" id="CHEBI:78534"/>
        <dbReference type="ChEBI" id="CHEBI:456215"/>
        <dbReference type="EC" id="6.1.1.3"/>
    </reaction>
</comment>
<comment type="cofactor">
    <cofactor evidence="1">
        <name>Zn(2+)</name>
        <dbReference type="ChEBI" id="CHEBI:29105"/>
    </cofactor>
    <text evidence="1">Binds 1 zinc ion per subunit.</text>
</comment>
<comment type="subunit">
    <text evidence="1">Homodimer.</text>
</comment>
<comment type="subcellular location">
    <subcellularLocation>
        <location evidence="1">Cytoplasm</location>
    </subcellularLocation>
</comment>
<comment type="similarity">
    <text evidence="1">Belongs to the class-II aminoacyl-tRNA synthetase family.</text>
</comment>
<evidence type="ECO:0000255" key="1">
    <source>
        <dbReference type="HAMAP-Rule" id="MF_00184"/>
    </source>
</evidence>
<evidence type="ECO:0000255" key="2">
    <source>
        <dbReference type="PROSITE-ProRule" id="PRU01228"/>
    </source>
</evidence>
<keyword id="KW-0030">Aminoacyl-tRNA synthetase</keyword>
<keyword id="KW-0067">ATP-binding</keyword>
<keyword id="KW-0963">Cytoplasm</keyword>
<keyword id="KW-0436">Ligase</keyword>
<keyword id="KW-0479">Metal-binding</keyword>
<keyword id="KW-0547">Nucleotide-binding</keyword>
<keyword id="KW-0648">Protein biosynthesis</keyword>
<keyword id="KW-0694">RNA-binding</keyword>
<keyword id="KW-0820">tRNA-binding</keyword>
<keyword id="KW-0862">Zinc</keyword>
<gene>
    <name evidence="1" type="primary">thrS</name>
    <name type="ordered locus">BMEI0915</name>
</gene>
<reference key="1">
    <citation type="journal article" date="2002" name="Proc. Natl. Acad. Sci. U.S.A.">
        <title>The genome sequence of the facultative intracellular pathogen Brucella melitensis.</title>
        <authorList>
            <person name="DelVecchio V.G."/>
            <person name="Kapatral V."/>
            <person name="Redkar R.J."/>
            <person name="Patra G."/>
            <person name="Mujer C."/>
            <person name="Los T."/>
            <person name="Ivanova N."/>
            <person name="Anderson I."/>
            <person name="Bhattacharyya A."/>
            <person name="Lykidis A."/>
            <person name="Reznik G."/>
            <person name="Jablonski L."/>
            <person name="Larsen N."/>
            <person name="D'Souza M."/>
            <person name="Bernal A."/>
            <person name="Mazur M."/>
            <person name="Goltsman E."/>
            <person name="Selkov E."/>
            <person name="Elzer P.H."/>
            <person name="Hagius S."/>
            <person name="O'Callaghan D."/>
            <person name="Letesson J.-J."/>
            <person name="Haselkorn R."/>
            <person name="Kyrpides N.C."/>
            <person name="Overbeek R."/>
        </authorList>
    </citation>
    <scope>NUCLEOTIDE SEQUENCE [LARGE SCALE GENOMIC DNA]</scope>
    <source>
        <strain>ATCC 23456 / CCUG 17765 / NCTC 10094 / 16M</strain>
    </source>
</reference>
<dbReference type="EC" id="6.1.1.3" evidence="1"/>
<dbReference type="EMBL" id="AE008917">
    <property type="protein sequence ID" value="AAL52096.1"/>
    <property type="molecule type" value="Genomic_DNA"/>
</dbReference>
<dbReference type="PIR" id="AE3366">
    <property type="entry name" value="AE3366"/>
</dbReference>
<dbReference type="RefSeq" id="WP_004683809.1">
    <property type="nucleotide sequence ID" value="NZ_GG703778.1"/>
</dbReference>
<dbReference type="SMR" id="Q8YH89"/>
<dbReference type="GeneID" id="29593730"/>
<dbReference type="KEGG" id="bme:BMEI0915"/>
<dbReference type="KEGG" id="bmel:DK63_507"/>
<dbReference type="PATRIC" id="fig|224914.52.peg.529"/>
<dbReference type="eggNOG" id="COG0441">
    <property type="taxonomic scope" value="Bacteria"/>
</dbReference>
<dbReference type="Proteomes" id="UP000000419">
    <property type="component" value="Chromosome I"/>
</dbReference>
<dbReference type="GO" id="GO:0005829">
    <property type="term" value="C:cytosol"/>
    <property type="evidence" value="ECO:0007669"/>
    <property type="project" value="TreeGrafter"/>
</dbReference>
<dbReference type="GO" id="GO:0005524">
    <property type="term" value="F:ATP binding"/>
    <property type="evidence" value="ECO:0007669"/>
    <property type="project" value="UniProtKB-UniRule"/>
</dbReference>
<dbReference type="GO" id="GO:0046872">
    <property type="term" value="F:metal ion binding"/>
    <property type="evidence" value="ECO:0007669"/>
    <property type="project" value="UniProtKB-KW"/>
</dbReference>
<dbReference type="GO" id="GO:0004829">
    <property type="term" value="F:threonine-tRNA ligase activity"/>
    <property type="evidence" value="ECO:0007669"/>
    <property type="project" value="UniProtKB-UniRule"/>
</dbReference>
<dbReference type="GO" id="GO:0000049">
    <property type="term" value="F:tRNA binding"/>
    <property type="evidence" value="ECO:0007669"/>
    <property type="project" value="UniProtKB-KW"/>
</dbReference>
<dbReference type="GO" id="GO:0006435">
    <property type="term" value="P:threonyl-tRNA aminoacylation"/>
    <property type="evidence" value="ECO:0007669"/>
    <property type="project" value="UniProtKB-UniRule"/>
</dbReference>
<dbReference type="CDD" id="cd01667">
    <property type="entry name" value="TGS_ThrRS"/>
    <property type="match status" value="1"/>
</dbReference>
<dbReference type="CDD" id="cd00860">
    <property type="entry name" value="ThrRS_anticodon"/>
    <property type="match status" value="1"/>
</dbReference>
<dbReference type="CDD" id="cd00771">
    <property type="entry name" value="ThrRS_core"/>
    <property type="match status" value="1"/>
</dbReference>
<dbReference type="FunFam" id="3.30.54.20:FF:000002">
    <property type="entry name" value="Threonine--tRNA ligase"/>
    <property type="match status" value="1"/>
</dbReference>
<dbReference type="FunFam" id="3.30.930.10:FF:000002">
    <property type="entry name" value="Threonine--tRNA ligase"/>
    <property type="match status" value="1"/>
</dbReference>
<dbReference type="FunFam" id="3.40.50.800:FF:000001">
    <property type="entry name" value="Threonine--tRNA ligase"/>
    <property type="match status" value="1"/>
</dbReference>
<dbReference type="FunFam" id="3.30.980.10:FF:000005">
    <property type="entry name" value="Threonyl-tRNA synthetase, mitochondrial"/>
    <property type="match status" value="1"/>
</dbReference>
<dbReference type="Gene3D" id="3.10.20.30">
    <property type="match status" value="1"/>
</dbReference>
<dbReference type="Gene3D" id="3.30.54.20">
    <property type="match status" value="1"/>
</dbReference>
<dbReference type="Gene3D" id="3.40.50.800">
    <property type="entry name" value="Anticodon-binding domain"/>
    <property type="match status" value="1"/>
</dbReference>
<dbReference type="Gene3D" id="3.30.930.10">
    <property type="entry name" value="Bira Bifunctional Protein, Domain 2"/>
    <property type="match status" value="1"/>
</dbReference>
<dbReference type="Gene3D" id="3.30.980.10">
    <property type="entry name" value="Threonyl-trna Synthetase, Chain A, domain 2"/>
    <property type="match status" value="1"/>
</dbReference>
<dbReference type="HAMAP" id="MF_00184">
    <property type="entry name" value="Thr_tRNA_synth"/>
    <property type="match status" value="1"/>
</dbReference>
<dbReference type="InterPro" id="IPR002314">
    <property type="entry name" value="aa-tRNA-synt_IIb"/>
</dbReference>
<dbReference type="InterPro" id="IPR006195">
    <property type="entry name" value="aa-tRNA-synth_II"/>
</dbReference>
<dbReference type="InterPro" id="IPR045864">
    <property type="entry name" value="aa-tRNA-synth_II/BPL/LPL"/>
</dbReference>
<dbReference type="InterPro" id="IPR004154">
    <property type="entry name" value="Anticodon-bd"/>
</dbReference>
<dbReference type="InterPro" id="IPR036621">
    <property type="entry name" value="Anticodon-bd_dom_sf"/>
</dbReference>
<dbReference type="InterPro" id="IPR012675">
    <property type="entry name" value="Beta-grasp_dom_sf"/>
</dbReference>
<dbReference type="InterPro" id="IPR004095">
    <property type="entry name" value="TGS"/>
</dbReference>
<dbReference type="InterPro" id="IPR012676">
    <property type="entry name" value="TGS-like"/>
</dbReference>
<dbReference type="InterPro" id="IPR002320">
    <property type="entry name" value="Thr-tRNA-ligase_IIa"/>
</dbReference>
<dbReference type="InterPro" id="IPR018163">
    <property type="entry name" value="Thr/Ala-tRNA-synth_IIc_edit"/>
</dbReference>
<dbReference type="InterPro" id="IPR047246">
    <property type="entry name" value="ThrRS_anticodon"/>
</dbReference>
<dbReference type="InterPro" id="IPR033728">
    <property type="entry name" value="ThrRS_core"/>
</dbReference>
<dbReference type="InterPro" id="IPR012947">
    <property type="entry name" value="tRNA_SAD"/>
</dbReference>
<dbReference type="NCBIfam" id="TIGR00418">
    <property type="entry name" value="thrS"/>
    <property type="match status" value="1"/>
</dbReference>
<dbReference type="PANTHER" id="PTHR11451:SF44">
    <property type="entry name" value="THREONINE--TRNA LIGASE, CHLOROPLASTIC_MITOCHONDRIAL 2"/>
    <property type="match status" value="1"/>
</dbReference>
<dbReference type="PANTHER" id="PTHR11451">
    <property type="entry name" value="THREONINE-TRNA LIGASE"/>
    <property type="match status" value="1"/>
</dbReference>
<dbReference type="Pfam" id="PF03129">
    <property type="entry name" value="HGTP_anticodon"/>
    <property type="match status" value="1"/>
</dbReference>
<dbReference type="Pfam" id="PF02824">
    <property type="entry name" value="TGS"/>
    <property type="match status" value="1"/>
</dbReference>
<dbReference type="Pfam" id="PF00587">
    <property type="entry name" value="tRNA-synt_2b"/>
    <property type="match status" value="1"/>
</dbReference>
<dbReference type="Pfam" id="PF07973">
    <property type="entry name" value="tRNA_SAD"/>
    <property type="match status" value="1"/>
</dbReference>
<dbReference type="PRINTS" id="PR01047">
    <property type="entry name" value="TRNASYNTHTHR"/>
</dbReference>
<dbReference type="SMART" id="SM00863">
    <property type="entry name" value="tRNA_SAD"/>
    <property type="match status" value="1"/>
</dbReference>
<dbReference type="SUPFAM" id="SSF52954">
    <property type="entry name" value="Class II aaRS ABD-related"/>
    <property type="match status" value="1"/>
</dbReference>
<dbReference type="SUPFAM" id="SSF55681">
    <property type="entry name" value="Class II aaRS and biotin synthetases"/>
    <property type="match status" value="1"/>
</dbReference>
<dbReference type="SUPFAM" id="SSF81271">
    <property type="entry name" value="TGS-like"/>
    <property type="match status" value="1"/>
</dbReference>
<dbReference type="SUPFAM" id="SSF55186">
    <property type="entry name" value="ThrRS/AlaRS common domain"/>
    <property type="match status" value="1"/>
</dbReference>
<dbReference type="PROSITE" id="PS50862">
    <property type="entry name" value="AA_TRNA_LIGASE_II"/>
    <property type="match status" value="1"/>
</dbReference>
<dbReference type="PROSITE" id="PS51880">
    <property type="entry name" value="TGS"/>
    <property type="match status" value="1"/>
</dbReference>
<accession>Q8YH89</accession>
<organism>
    <name type="scientific">Brucella melitensis biotype 1 (strain ATCC 23456 / CCUG 17765 / NCTC 10094 / 16M)</name>
    <dbReference type="NCBI Taxonomy" id="224914"/>
    <lineage>
        <taxon>Bacteria</taxon>
        <taxon>Pseudomonadati</taxon>
        <taxon>Pseudomonadota</taxon>
        <taxon>Alphaproteobacteria</taxon>
        <taxon>Hyphomicrobiales</taxon>
        <taxon>Brucellaceae</taxon>
        <taxon>Brucella/Ochrobactrum group</taxon>
        <taxon>Brucella</taxon>
    </lineage>
</organism>
<name>SYT_BRUME</name>
<sequence length="658" mass="74580">MSNTVSLQFPDGSVREYDASMTGAALAESISKSLAKKAVAYAVDGTVRDLSDPLGASGKVEIITREDPRALELIRHDTAHVLAEAVQELFPGTQVTIGPVIENGFYYDFARNEPFTLDDLPVIEKKMREIIQRNKPFTKEVWSREKAKQVFSDKGESYKVELVDAIPAGQDLKIYYQGDWFDLCRGPHMASTGQIGNSFKLMKVAGAYWRGDANNPMLTRIYGTAFANDNDLQAYLHMLEEAEKRDHRRLGREMDLFHFQEEGPGVVFWHAKGWKMFQNLVSYMRRRLDSHGYQEVNTPQVLDKSLWETSGHWGWYRDNMFKVTVAGDDTDDDRVFALKPMNCPGHVQIFKHGLKSYRDLPIKLAEFGNVHRYEPSGALHGLMRVRGFTQDDAHIFCTEEQMAAECLQINDLILSVYKDFGFEEITIKLSTRPEKRVGSDELWDRAESVMMTVLEQIRQQSNNIKTGILPGEGAFYGPKFEYTLKDAIGREWQCGTTQVDFNLPERFGAFYIGADSEKKQPVMIHRAICGSMERFLGILIENFAGHMPLWFAPVQVVVATITSDADEYAKEAAAKLKAAGLQVVTDLRNEKINYKVREHSLQKVPVILVCGKREAEEKTVNMRRLGSRDQESMTLDEAIARLCEEATPPDLLRLKNAG</sequence>